<dbReference type="EC" id="7.1.2.2" evidence="1"/>
<dbReference type="EMBL" id="AF368465">
    <property type="protein sequence ID" value="AAL66411.1"/>
    <property type="molecule type" value="Genomic_DNA"/>
</dbReference>
<dbReference type="EMBL" id="AE007317">
    <property type="protein sequence ID" value="AAL00166.1"/>
    <property type="molecule type" value="Genomic_DNA"/>
</dbReference>
<dbReference type="RefSeq" id="NP_358955.1">
    <property type="nucleotide sequence ID" value="NC_003098.1"/>
</dbReference>
<dbReference type="RefSeq" id="WP_000996639.1">
    <property type="nucleotide sequence ID" value="NC_003098.1"/>
</dbReference>
<dbReference type="SMR" id="Q7CRB1"/>
<dbReference type="STRING" id="171101.spr1362"/>
<dbReference type="KEGG" id="spr:spr1362"/>
<dbReference type="PATRIC" id="fig|171101.6.peg.1476"/>
<dbReference type="eggNOG" id="COG0056">
    <property type="taxonomic scope" value="Bacteria"/>
</dbReference>
<dbReference type="HOGENOM" id="CLU_010091_2_1_9"/>
<dbReference type="Proteomes" id="UP000000586">
    <property type="component" value="Chromosome"/>
</dbReference>
<dbReference type="GO" id="GO:0005886">
    <property type="term" value="C:plasma membrane"/>
    <property type="evidence" value="ECO:0007669"/>
    <property type="project" value="UniProtKB-SubCell"/>
</dbReference>
<dbReference type="GO" id="GO:0045259">
    <property type="term" value="C:proton-transporting ATP synthase complex"/>
    <property type="evidence" value="ECO:0007669"/>
    <property type="project" value="UniProtKB-KW"/>
</dbReference>
<dbReference type="GO" id="GO:0043531">
    <property type="term" value="F:ADP binding"/>
    <property type="evidence" value="ECO:0000318"/>
    <property type="project" value="GO_Central"/>
</dbReference>
<dbReference type="GO" id="GO:0005524">
    <property type="term" value="F:ATP binding"/>
    <property type="evidence" value="ECO:0000318"/>
    <property type="project" value="GO_Central"/>
</dbReference>
<dbReference type="GO" id="GO:0046933">
    <property type="term" value="F:proton-transporting ATP synthase activity, rotational mechanism"/>
    <property type="evidence" value="ECO:0007669"/>
    <property type="project" value="UniProtKB-UniRule"/>
</dbReference>
<dbReference type="GO" id="GO:0015986">
    <property type="term" value="P:proton motive force-driven ATP synthesis"/>
    <property type="evidence" value="ECO:0000318"/>
    <property type="project" value="GO_Central"/>
</dbReference>
<dbReference type="CDD" id="cd18113">
    <property type="entry name" value="ATP-synt_F1_alpha_C"/>
    <property type="match status" value="1"/>
</dbReference>
<dbReference type="CDD" id="cd18116">
    <property type="entry name" value="ATP-synt_F1_alpha_N"/>
    <property type="match status" value="1"/>
</dbReference>
<dbReference type="CDD" id="cd01132">
    <property type="entry name" value="F1-ATPase_alpha_CD"/>
    <property type="match status" value="1"/>
</dbReference>
<dbReference type="FunFam" id="1.20.150.20:FF:000001">
    <property type="entry name" value="ATP synthase subunit alpha"/>
    <property type="match status" value="1"/>
</dbReference>
<dbReference type="FunFam" id="2.40.30.20:FF:000001">
    <property type="entry name" value="ATP synthase subunit alpha"/>
    <property type="match status" value="1"/>
</dbReference>
<dbReference type="FunFam" id="3.40.50.300:FF:000002">
    <property type="entry name" value="ATP synthase subunit alpha"/>
    <property type="match status" value="1"/>
</dbReference>
<dbReference type="Gene3D" id="2.40.30.20">
    <property type="match status" value="1"/>
</dbReference>
<dbReference type="Gene3D" id="1.20.150.20">
    <property type="entry name" value="ATP synthase alpha/beta chain, C-terminal domain"/>
    <property type="match status" value="1"/>
</dbReference>
<dbReference type="Gene3D" id="3.40.50.300">
    <property type="entry name" value="P-loop containing nucleotide triphosphate hydrolases"/>
    <property type="match status" value="1"/>
</dbReference>
<dbReference type="HAMAP" id="MF_01346">
    <property type="entry name" value="ATP_synth_alpha_bact"/>
    <property type="match status" value="1"/>
</dbReference>
<dbReference type="InterPro" id="IPR023366">
    <property type="entry name" value="ATP_synth_asu-like_sf"/>
</dbReference>
<dbReference type="InterPro" id="IPR000793">
    <property type="entry name" value="ATP_synth_asu_C"/>
</dbReference>
<dbReference type="InterPro" id="IPR038376">
    <property type="entry name" value="ATP_synth_asu_C_sf"/>
</dbReference>
<dbReference type="InterPro" id="IPR033732">
    <property type="entry name" value="ATP_synth_F1_a_nt-bd_dom"/>
</dbReference>
<dbReference type="InterPro" id="IPR005294">
    <property type="entry name" value="ATP_synth_F1_asu"/>
</dbReference>
<dbReference type="InterPro" id="IPR004100">
    <property type="entry name" value="ATPase_F1/V1/A1_a/bsu_N"/>
</dbReference>
<dbReference type="InterPro" id="IPR036121">
    <property type="entry name" value="ATPase_F1/V1/A1_a/bsu_N_sf"/>
</dbReference>
<dbReference type="InterPro" id="IPR000194">
    <property type="entry name" value="ATPase_F1/V1/A1_a/bsu_nucl-bd"/>
</dbReference>
<dbReference type="InterPro" id="IPR027417">
    <property type="entry name" value="P-loop_NTPase"/>
</dbReference>
<dbReference type="NCBIfam" id="TIGR00962">
    <property type="entry name" value="atpA"/>
    <property type="match status" value="1"/>
</dbReference>
<dbReference type="NCBIfam" id="NF009884">
    <property type="entry name" value="PRK13343.1"/>
    <property type="match status" value="1"/>
</dbReference>
<dbReference type="PANTHER" id="PTHR48082">
    <property type="entry name" value="ATP SYNTHASE SUBUNIT ALPHA, MITOCHONDRIAL"/>
    <property type="match status" value="1"/>
</dbReference>
<dbReference type="PANTHER" id="PTHR48082:SF2">
    <property type="entry name" value="ATP SYNTHASE SUBUNIT ALPHA, MITOCHONDRIAL"/>
    <property type="match status" value="1"/>
</dbReference>
<dbReference type="Pfam" id="PF00006">
    <property type="entry name" value="ATP-synt_ab"/>
    <property type="match status" value="1"/>
</dbReference>
<dbReference type="Pfam" id="PF00306">
    <property type="entry name" value="ATP-synt_ab_C"/>
    <property type="match status" value="1"/>
</dbReference>
<dbReference type="Pfam" id="PF02874">
    <property type="entry name" value="ATP-synt_ab_N"/>
    <property type="match status" value="1"/>
</dbReference>
<dbReference type="PIRSF" id="PIRSF039088">
    <property type="entry name" value="F_ATPase_subunit_alpha"/>
    <property type="match status" value="1"/>
</dbReference>
<dbReference type="SUPFAM" id="SSF47917">
    <property type="entry name" value="C-terminal domain of alpha and beta subunits of F1 ATP synthase"/>
    <property type="match status" value="1"/>
</dbReference>
<dbReference type="SUPFAM" id="SSF50615">
    <property type="entry name" value="N-terminal domain of alpha and beta subunits of F1 ATP synthase"/>
    <property type="match status" value="1"/>
</dbReference>
<dbReference type="SUPFAM" id="SSF52540">
    <property type="entry name" value="P-loop containing nucleoside triphosphate hydrolases"/>
    <property type="match status" value="1"/>
</dbReference>
<comment type="function">
    <text evidence="1">Produces ATP from ADP in the presence of a proton gradient across the membrane. The alpha chain is a regulatory subunit.</text>
</comment>
<comment type="catalytic activity">
    <reaction evidence="1">
        <text>ATP + H2O + 4 H(+)(in) = ADP + phosphate + 5 H(+)(out)</text>
        <dbReference type="Rhea" id="RHEA:57720"/>
        <dbReference type="ChEBI" id="CHEBI:15377"/>
        <dbReference type="ChEBI" id="CHEBI:15378"/>
        <dbReference type="ChEBI" id="CHEBI:30616"/>
        <dbReference type="ChEBI" id="CHEBI:43474"/>
        <dbReference type="ChEBI" id="CHEBI:456216"/>
        <dbReference type="EC" id="7.1.2.2"/>
    </reaction>
</comment>
<comment type="subunit">
    <text evidence="1 2">F-type ATPases have 2 components, CF(1) - the catalytic core - and CF(0) - the membrane proton channel. CF(1) has five subunits: alpha(3), beta(3), gamma(1), delta(1), epsilon(1). CF(0) has three main subunits: a(1), b(2) and c(9-12). The alpha and beta chains form an alternating ring which encloses part of the gamma chain. CF(1) is attached to CF(0) by a central stalk formed by the gamma and epsilon chains, while a peripheral stalk is formed by the delta and b chains.</text>
</comment>
<comment type="subcellular location">
    <subcellularLocation>
        <location evidence="3">Cell membrane</location>
        <topology evidence="3">Peripheral membrane protein</topology>
    </subcellularLocation>
</comment>
<comment type="induction">
    <text evidence="2">Induced by a decrease in external pH from 7.5 to 5.7.</text>
</comment>
<comment type="similarity">
    <text evidence="1">Belongs to the ATPase alpha/beta chains family.</text>
</comment>
<feature type="chain" id="PRO_0000238365" description="ATP synthase subunit alpha">
    <location>
        <begin position="1"/>
        <end position="501"/>
    </location>
</feature>
<feature type="binding site" evidence="1">
    <location>
        <begin position="169"/>
        <end position="176"/>
    </location>
    <ligand>
        <name>ATP</name>
        <dbReference type="ChEBI" id="CHEBI:30616"/>
    </ligand>
</feature>
<feature type="site" description="Required for activity" evidence="1">
    <location>
        <position position="362"/>
    </location>
</feature>
<reference key="1">
    <citation type="journal article" date="2001" name="Mol. Microbiol.">
        <title>The promoter of the operon encoding the F0F1 ATPase of Streptococcus pneumoniae is inducible by pH.</title>
        <authorList>
            <person name="Martin-Galiano A.J."/>
            <person name="Ferrandiz M.J."/>
            <person name="de la Campa A.G."/>
        </authorList>
    </citation>
    <scope>NUCLEOTIDE SEQUENCE [GENOMIC DNA]</scope>
    <scope>SUBUNIT</scope>
    <scope>SUBCELLULAR LOCATION</scope>
    <scope>INDUCTION</scope>
</reference>
<reference key="2">
    <citation type="journal article" date="2001" name="J. Bacteriol.">
        <title>Genome of the bacterium Streptococcus pneumoniae strain R6.</title>
        <authorList>
            <person name="Hoskins J."/>
            <person name="Alborn W.E. Jr."/>
            <person name="Arnold J."/>
            <person name="Blaszczak L.C."/>
            <person name="Burgett S."/>
            <person name="DeHoff B.S."/>
            <person name="Estrem S.T."/>
            <person name="Fritz L."/>
            <person name="Fu D.-J."/>
            <person name="Fuller W."/>
            <person name="Geringer C."/>
            <person name="Gilmour R."/>
            <person name="Glass J.S."/>
            <person name="Khoja H."/>
            <person name="Kraft A.R."/>
            <person name="Lagace R.E."/>
            <person name="LeBlanc D.J."/>
            <person name="Lee L.N."/>
            <person name="Lefkowitz E.J."/>
            <person name="Lu J."/>
            <person name="Matsushima P."/>
            <person name="McAhren S.M."/>
            <person name="McHenney M."/>
            <person name="McLeaster K."/>
            <person name="Mundy C.W."/>
            <person name="Nicas T.I."/>
            <person name="Norris F.H."/>
            <person name="O'Gara M."/>
            <person name="Peery R.B."/>
            <person name="Robertson G.T."/>
            <person name="Rockey P."/>
            <person name="Sun P.-M."/>
            <person name="Winkler M.E."/>
            <person name="Yang Y."/>
            <person name="Young-Bellido M."/>
            <person name="Zhao G."/>
            <person name="Zook C.A."/>
            <person name="Baltz R.H."/>
            <person name="Jaskunas S.R."/>
            <person name="Rosteck P.R. Jr."/>
            <person name="Skatrud P.L."/>
            <person name="Glass J.I."/>
        </authorList>
    </citation>
    <scope>NUCLEOTIDE SEQUENCE [LARGE SCALE GENOMIC DNA]</scope>
    <source>
        <strain>ATCC BAA-255 / R6</strain>
    </source>
</reference>
<keyword id="KW-0066">ATP synthesis</keyword>
<keyword id="KW-0067">ATP-binding</keyword>
<keyword id="KW-1003">Cell membrane</keyword>
<keyword id="KW-0139">CF(1)</keyword>
<keyword id="KW-0375">Hydrogen ion transport</keyword>
<keyword id="KW-0406">Ion transport</keyword>
<keyword id="KW-0472">Membrane</keyword>
<keyword id="KW-0547">Nucleotide-binding</keyword>
<keyword id="KW-1185">Reference proteome</keyword>
<keyword id="KW-1278">Translocase</keyword>
<keyword id="KW-0813">Transport</keyword>
<protein>
    <recommendedName>
        <fullName evidence="1">ATP synthase subunit alpha</fullName>
        <ecNumber evidence="1">7.1.2.2</ecNumber>
    </recommendedName>
    <alternativeName>
        <fullName evidence="1">ATP synthase F1 sector subunit alpha</fullName>
    </alternativeName>
    <alternativeName>
        <fullName evidence="1">F-ATPase subunit alpha</fullName>
    </alternativeName>
</protein>
<proteinExistence type="evidence at protein level"/>
<organism>
    <name type="scientific">Streptococcus pneumoniae (strain ATCC BAA-255 / R6)</name>
    <dbReference type="NCBI Taxonomy" id="171101"/>
    <lineage>
        <taxon>Bacteria</taxon>
        <taxon>Bacillati</taxon>
        <taxon>Bacillota</taxon>
        <taxon>Bacilli</taxon>
        <taxon>Lactobacillales</taxon>
        <taxon>Streptococcaceae</taxon>
        <taxon>Streptococcus</taxon>
    </lineage>
</organism>
<name>ATPA_STRR6</name>
<accession>Q7CRB1</accession>
<sequence length="501" mass="54645">MAINAQEISALIKQQIENFKPNFDVTETGVVTYIGDGIARAHGLENVMSGELLNFENGSYGMAQNLESTDVGIIILGDFTDIREGDTIRRTGKIMEVPVGESLIGRVVDPLGRPVDGLGEIHTDKTRPVEAPAPGVMQRKSVSEPLQTGLKAIDALVPIGRGQRELIIGDRQTGKTTIAIDTILNQKDQDMICIYVAIGQKESTVRTQVETLRQYGALDYTIVVTASASQPSPLLFLAPYAGVAMAEEFMYQGKHVLIVYDDLSKQAVAYRELSLLLRRPPGREAFPGDVFYLHSRLLERSAKVSDELGGGSITALPFIETQAGDISAYIATNVISITDGQIFLGDGLFNAGIRPAIDAGSSVSRVGGSAQIKAMKKVAGTLRIDLASYRELEAFTKFGSDLDAATQAKLNRGRRTVEVLKQPVHKPLPVEKQVTILYALTHGFLDTVPVDDIVRFEEEFHAFFDAQHPEILETIRDTKDLPEEAVLDAAITEFLNQSSFQ</sequence>
<gene>
    <name evidence="1" type="primary">atpA</name>
    <name type="ordered locus">spr1362</name>
</gene>
<evidence type="ECO:0000255" key="1">
    <source>
        <dbReference type="HAMAP-Rule" id="MF_01346"/>
    </source>
</evidence>
<evidence type="ECO:0000269" key="2">
    <source>
    </source>
</evidence>
<evidence type="ECO:0000305" key="3">
    <source>
    </source>
</evidence>